<protein>
    <recommendedName>
        <fullName evidence="1">NAD-dependent protein deacylase</fullName>
        <ecNumber evidence="1 2">2.3.1.286</ecNumber>
    </recommendedName>
    <alternativeName>
        <fullName evidence="1">Regulatory protein SIR2 homolog</fullName>
    </alternativeName>
</protein>
<gene>
    <name evidence="1" type="primary">cobB</name>
    <name type="ordered locus">Cj1050c</name>
</gene>
<evidence type="ECO:0000255" key="1">
    <source>
        <dbReference type="HAMAP-Rule" id="MF_01121"/>
    </source>
</evidence>
<evidence type="ECO:0000255" key="2">
    <source>
        <dbReference type="PROSITE-ProRule" id="PRU00236"/>
    </source>
</evidence>
<evidence type="ECO:0000305" key="3"/>
<feature type="chain" id="PRO_0000110301" description="NAD-dependent protein deacylase">
    <location>
        <begin position="1"/>
        <end position="233"/>
    </location>
</feature>
<feature type="domain" description="Deacetylase sirtuin-type" evidence="2">
    <location>
        <begin position="1"/>
        <end position="230"/>
    </location>
</feature>
<feature type="active site" description="Proton acceptor" evidence="2">
    <location>
        <position position="106"/>
    </location>
</feature>
<feature type="binding site" evidence="1">
    <location>
        <begin position="9"/>
        <end position="28"/>
    </location>
    <ligand>
        <name>NAD(+)</name>
        <dbReference type="ChEBI" id="CHEBI:57540"/>
    </ligand>
</feature>
<feature type="binding site" evidence="1">
    <location>
        <position position="53"/>
    </location>
    <ligand>
        <name>substrate</name>
    </ligand>
</feature>
<feature type="binding site" evidence="1">
    <location>
        <position position="56"/>
    </location>
    <ligand>
        <name>substrate</name>
    </ligand>
</feature>
<feature type="binding site" evidence="1">
    <location>
        <begin position="88"/>
        <end position="91"/>
    </location>
    <ligand>
        <name>NAD(+)</name>
        <dbReference type="ChEBI" id="CHEBI:57540"/>
    </ligand>
</feature>
<feature type="binding site" evidence="1">
    <location>
        <position position="114"/>
    </location>
    <ligand>
        <name>Zn(2+)</name>
        <dbReference type="ChEBI" id="CHEBI:29105"/>
    </ligand>
</feature>
<feature type="binding site" evidence="1">
    <location>
        <position position="117"/>
    </location>
    <ligand>
        <name>Zn(2+)</name>
        <dbReference type="ChEBI" id="CHEBI:29105"/>
    </ligand>
</feature>
<feature type="binding site" evidence="1">
    <location>
        <position position="133"/>
    </location>
    <ligand>
        <name>Zn(2+)</name>
        <dbReference type="ChEBI" id="CHEBI:29105"/>
    </ligand>
</feature>
<feature type="binding site" evidence="1">
    <location>
        <position position="136"/>
    </location>
    <ligand>
        <name>Zn(2+)</name>
        <dbReference type="ChEBI" id="CHEBI:29105"/>
    </ligand>
</feature>
<feature type="binding site" evidence="1">
    <location>
        <begin position="172"/>
        <end position="174"/>
    </location>
    <ligand>
        <name>NAD(+)</name>
        <dbReference type="ChEBI" id="CHEBI:57540"/>
    </ligand>
</feature>
<feature type="binding site" evidence="1">
    <location>
        <begin position="200"/>
        <end position="202"/>
    </location>
    <ligand>
        <name>NAD(+)</name>
        <dbReference type="ChEBI" id="CHEBI:57540"/>
    </ligand>
</feature>
<feature type="sequence conflict" description="In Ref. 1; AAF77189." evidence="3" ref="1">
    <original>AG</original>
    <variation>RD</variation>
    <location>
        <begin position="10"/>
        <end position="11"/>
    </location>
</feature>
<feature type="sequence conflict" description="In Ref. 1; AAF77189." evidence="3" ref="1">
    <original>F</original>
    <variation>I</variation>
    <location>
        <position position="128"/>
    </location>
</feature>
<feature type="sequence conflict" description="In Ref. 1; AAF77189." evidence="3" ref="1">
    <original>H</original>
    <variation>N</variation>
    <location>
        <position position="163"/>
    </location>
</feature>
<feature type="sequence conflict" description="In Ref. 1; AAF77189." evidence="3" ref="1">
    <original>I</original>
    <variation>V</variation>
    <location>
        <position position="171"/>
    </location>
</feature>
<feature type="sequence conflict" description="In Ref. 1; AAF77189." evidence="3" ref="1">
    <original>QYA</original>
    <variation>RYP</variation>
    <location>
        <begin position="182"/>
        <end position="184"/>
    </location>
</feature>
<feature type="sequence conflict" description="In Ref. 1; AAF77189." evidence="3" ref="1">
    <original>V</original>
    <variation>A</variation>
    <location>
        <position position="199"/>
    </location>
</feature>
<feature type="sequence conflict" description="In Ref. 1; AAF77189." evidence="3" ref="1">
    <original>RY</original>
    <variation>WN</variation>
    <location>
        <begin position="203"/>
        <end position="204"/>
    </location>
</feature>
<feature type="sequence conflict" description="In Ref. 1; AAF77189." evidence="3" ref="1">
    <original>F</original>
    <variation>L</variation>
    <location>
        <position position="227"/>
    </location>
</feature>
<organism>
    <name type="scientific">Campylobacter jejuni subsp. jejuni serotype O:2 (strain ATCC 700819 / NCTC 11168)</name>
    <dbReference type="NCBI Taxonomy" id="192222"/>
    <lineage>
        <taxon>Bacteria</taxon>
        <taxon>Pseudomonadati</taxon>
        <taxon>Campylobacterota</taxon>
        <taxon>Epsilonproteobacteria</taxon>
        <taxon>Campylobacterales</taxon>
        <taxon>Campylobacteraceae</taxon>
        <taxon>Campylobacter</taxon>
    </lineage>
</organism>
<dbReference type="EC" id="2.3.1.286" evidence="1 2"/>
<dbReference type="EMBL" id="AL111168">
    <property type="protein sequence ID" value="CAL35168.1"/>
    <property type="molecule type" value="Genomic_DNA"/>
</dbReference>
<dbReference type="EMBL" id="AF264911">
    <property type="protein sequence ID" value="AAF77189.1"/>
    <property type="molecule type" value="Genomic_DNA"/>
</dbReference>
<dbReference type="PIR" id="G81307">
    <property type="entry name" value="G81307"/>
</dbReference>
<dbReference type="RefSeq" id="WP_002864286.1">
    <property type="nucleotide sequence ID" value="NZ_SZUC01000001.1"/>
</dbReference>
<dbReference type="SMR" id="Q9JN05"/>
<dbReference type="IntAct" id="Q9JN05">
    <property type="interactions" value="2"/>
</dbReference>
<dbReference type="STRING" id="192222.Cj1050c"/>
<dbReference type="PaxDb" id="192222-Cj1050c"/>
<dbReference type="EnsemblBacteria" id="CAL35168">
    <property type="protein sequence ID" value="CAL35168"/>
    <property type="gene ID" value="Cj1050c"/>
</dbReference>
<dbReference type="KEGG" id="cje:Cj1050c"/>
<dbReference type="PATRIC" id="fig|192222.6.peg.1032"/>
<dbReference type="eggNOG" id="COG0846">
    <property type="taxonomic scope" value="Bacteria"/>
</dbReference>
<dbReference type="HOGENOM" id="CLU_023643_3_1_7"/>
<dbReference type="OrthoDB" id="9800582at2"/>
<dbReference type="Proteomes" id="UP000000799">
    <property type="component" value="Chromosome"/>
</dbReference>
<dbReference type="GO" id="GO:0005737">
    <property type="term" value="C:cytoplasm"/>
    <property type="evidence" value="ECO:0007669"/>
    <property type="project" value="UniProtKB-SubCell"/>
</dbReference>
<dbReference type="GO" id="GO:0017136">
    <property type="term" value="F:histone deacetylase activity, NAD-dependent"/>
    <property type="evidence" value="ECO:0007669"/>
    <property type="project" value="TreeGrafter"/>
</dbReference>
<dbReference type="GO" id="GO:0046872">
    <property type="term" value="F:metal ion binding"/>
    <property type="evidence" value="ECO:0007669"/>
    <property type="project" value="UniProtKB-KW"/>
</dbReference>
<dbReference type="GO" id="GO:0070403">
    <property type="term" value="F:NAD+ binding"/>
    <property type="evidence" value="ECO:0007669"/>
    <property type="project" value="UniProtKB-UniRule"/>
</dbReference>
<dbReference type="GO" id="GO:0036054">
    <property type="term" value="F:protein-malonyllysine demalonylase activity"/>
    <property type="evidence" value="ECO:0007669"/>
    <property type="project" value="InterPro"/>
</dbReference>
<dbReference type="GO" id="GO:0036055">
    <property type="term" value="F:protein-succinyllysine desuccinylase activity"/>
    <property type="evidence" value="ECO:0007669"/>
    <property type="project" value="UniProtKB-UniRule"/>
</dbReference>
<dbReference type="Gene3D" id="3.30.1600.10">
    <property type="entry name" value="SIR2/SIRT2 'Small Domain"/>
    <property type="match status" value="1"/>
</dbReference>
<dbReference type="Gene3D" id="3.40.50.1220">
    <property type="entry name" value="TPP-binding domain"/>
    <property type="match status" value="1"/>
</dbReference>
<dbReference type="HAMAP" id="MF_01121">
    <property type="entry name" value="Sirtuin_ClassIII"/>
    <property type="match status" value="1"/>
</dbReference>
<dbReference type="InterPro" id="IPR029035">
    <property type="entry name" value="DHS-like_NAD/FAD-binding_dom"/>
</dbReference>
<dbReference type="InterPro" id="IPR050134">
    <property type="entry name" value="NAD-dep_sirtuin_deacylases"/>
</dbReference>
<dbReference type="InterPro" id="IPR003000">
    <property type="entry name" value="Sirtuin"/>
</dbReference>
<dbReference type="InterPro" id="IPR026591">
    <property type="entry name" value="Sirtuin_cat_small_dom_sf"/>
</dbReference>
<dbReference type="InterPro" id="IPR027546">
    <property type="entry name" value="Sirtuin_class_III"/>
</dbReference>
<dbReference type="InterPro" id="IPR026590">
    <property type="entry name" value="Ssirtuin_cat_dom"/>
</dbReference>
<dbReference type="PANTHER" id="PTHR11085:SF4">
    <property type="entry name" value="NAD-DEPENDENT PROTEIN DEACYLASE"/>
    <property type="match status" value="1"/>
</dbReference>
<dbReference type="PANTHER" id="PTHR11085">
    <property type="entry name" value="NAD-DEPENDENT PROTEIN DEACYLASE SIRTUIN-5, MITOCHONDRIAL-RELATED"/>
    <property type="match status" value="1"/>
</dbReference>
<dbReference type="Pfam" id="PF02146">
    <property type="entry name" value="SIR2"/>
    <property type="match status" value="1"/>
</dbReference>
<dbReference type="SUPFAM" id="SSF52467">
    <property type="entry name" value="DHS-like NAD/FAD-binding domain"/>
    <property type="match status" value="1"/>
</dbReference>
<dbReference type="PROSITE" id="PS50305">
    <property type="entry name" value="SIRTUIN"/>
    <property type="match status" value="1"/>
</dbReference>
<sequence length="233" mass="26521">MKNIMILSGAGLSAPSGLKTFRDNDGLWEEYDVMEVCSATGFRKNPKKVLDFYDARRAQLQNVKPNHAHEKIAQLKEKWGKNLFVITQNVDDLLERAGCKDVVHLHGFLPELRCLKCEGIFNIGYEKFTDKQCPKCKSKDLRHNIVMFEEQAPAYATLYSLLHQTSLFISIGTSGAVLPVGQYASMCEKSILNIYEKDVNLERYFDKIYIEDIISAIDKIALDIENFMKDGNV</sequence>
<comment type="function">
    <text evidence="1">NAD-dependent lysine deacetylase and desuccinylase that specifically removes acetyl and succinyl groups on target proteins. Modulates the activities of several proteins which are inactive in their acylated form.</text>
</comment>
<comment type="catalytic activity">
    <reaction evidence="1">
        <text>N(6)-acetyl-L-lysyl-[protein] + NAD(+) + H2O = 2''-O-acetyl-ADP-D-ribose + nicotinamide + L-lysyl-[protein]</text>
        <dbReference type="Rhea" id="RHEA:43636"/>
        <dbReference type="Rhea" id="RHEA-COMP:9752"/>
        <dbReference type="Rhea" id="RHEA-COMP:10731"/>
        <dbReference type="ChEBI" id="CHEBI:15377"/>
        <dbReference type="ChEBI" id="CHEBI:17154"/>
        <dbReference type="ChEBI" id="CHEBI:29969"/>
        <dbReference type="ChEBI" id="CHEBI:57540"/>
        <dbReference type="ChEBI" id="CHEBI:61930"/>
        <dbReference type="ChEBI" id="CHEBI:83767"/>
        <dbReference type="EC" id="2.3.1.286"/>
    </reaction>
</comment>
<comment type="catalytic activity">
    <reaction evidence="1">
        <text>N(6)-succinyl-L-lysyl-[protein] + NAD(+) + H2O = 2''-O-succinyl-ADP-D-ribose + nicotinamide + L-lysyl-[protein]</text>
        <dbReference type="Rhea" id="RHEA:47668"/>
        <dbReference type="Rhea" id="RHEA-COMP:9752"/>
        <dbReference type="Rhea" id="RHEA-COMP:11877"/>
        <dbReference type="ChEBI" id="CHEBI:15377"/>
        <dbReference type="ChEBI" id="CHEBI:17154"/>
        <dbReference type="ChEBI" id="CHEBI:29969"/>
        <dbReference type="ChEBI" id="CHEBI:57540"/>
        <dbReference type="ChEBI" id="CHEBI:87830"/>
        <dbReference type="ChEBI" id="CHEBI:87832"/>
    </reaction>
</comment>
<comment type="cofactor">
    <cofactor evidence="1">
        <name>Zn(2+)</name>
        <dbReference type="ChEBI" id="CHEBI:29105"/>
    </cofactor>
    <text evidence="1">Binds 1 zinc ion per subunit.</text>
</comment>
<comment type="subcellular location">
    <subcellularLocation>
        <location evidence="1">Cytoplasm</location>
    </subcellularLocation>
</comment>
<comment type="domain">
    <text evidence="1">2 residues (Tyr-53 and Arg-56) present in a large hydrophobic pocket are probably involved in substrate specificity. They are important for desuccinylation activity, but dispensable for deacetylation activity.</text>
</comment>
<comment type="similarity">
    <text evidence="1">Belongs to the sirtuin family. Class III subfamily.</text>
</comment>
<reference key="1">
    <citation type="journal article" date="2000" name="Nature">
        <title>The genome sequence of the food-borne pathogen Campylobacter jejuni reveals hypervariable sequences.</title>
        <authorList>
            <person name="Parkhill J."/>
            <person name="Wren B.W."/>
            <person name="Mungall K.L."/>
            <person name="Ketley J.M."/>
            <person name="Churcher C.M."/>
            <person name="Basham D."/>
            <person name="Chillingworth T."/>
            <person name="Davies R.M."/>
            <person name="Feltwell T."/>
            <person name="Holroyd S."/>
            <person name="Jagels K."/>
            <person name="Karlyshev A.V."/>
            <person name="Moule S."/>
            <person name="Pallen M.J."/>
            <person name="Penn C.W."/>
            <person name="Quail M.A."/>
            <person name="Rajandream M.A."/>
            <person name="Rutherford K.M."/>
            <person name="van Vliet A.H.M."/>
            <person name="Whitehead S."/>
            <person name="Barrell B.G."/>
        </authorList>
    </citation>
    <scope>NUCLEOTIDE SEQUENCE [LARGE SCALE GENOMIC DNA]</scope>
    <source>
        <strain>ATCC 700819 / NCTC 11168</strain>
    </source>
</reference>
<reference key="2">
    <citation type="journal article" date="1995" name="Gene">
        <title>Two novel restriction endonucleases from Campylobacter jejuni.</title>
        <authorList>
            <person name="Vitor J.M."/>
            <person name="Morgan R.D."/>
        </authorList>
    </citation>
    <scope>NUCLEOTIDE SEQUENCE [GENOMIC DNA] OF 1-227</scope>
    <source>
        <strain>P37</strain>
    </source>
</reference>
<accession>Q9JN05</accession>
<accession>Q0P9K2</accession>
<accession>Q9PNP1</accession>
<name>NPD_CAMJE</name>
<keyword id="KW-0963">Cytoplasm</keyword>
<keyword id="KW-0479">Metal-binding</keyword>
<keyword id="KW-0520">NAD</keyword>
<keyword id="KW-1185">Reference proteome</keyword>
<keyword id="KW-0808">Transferase</keyword>
<keyword id="KW-0862">Zinc</keyword>
<proteinExistence type="inferred from homology"/>